<reference key="1">
    <citation type="journal article" date="2009" name="Infect. Immun.">
        <title>Comparative genomics reveal extensive transposon-mediated genomic plasticity and diversity among potential effector proteins within the genus Coxiella.</title>
        <authorList>
            <person name="Beare P.A."/>
            <person name="Unsworth N."/>
            <person name="Andoh M."/>
            <person name="Voth D.E."/>
            <person name="Omsland A."/>
            <person name="Gilk S.D."/>
            <person name="Williams K.P."/>
            <person name="Sobral B.W."/>
            <person name="Kupko J.J. III"/>
            <person name="Porcella S.F."/>
            <person name="Samuel J.E."/>
            <person name="Heinzen R.A."/>
        </authorList>
    </citation>
    <scope>NUCLEOTIDE SEQUENCE [LARGE SCALE GENOMIC DNA]</scope>
    <source>
        <strain>Dugway 5J108-111</strain>
    </source>
</reference>
<gene>
    <name evidence="1" type="primary">atpH</name>
    <name type="ordered locus">CBUD_0179</name>
</gene>
<name>ATPD_COXBN</name>
<dbReference type="EMBL" id="CP000733">
    <property type="protein sequence ID" value="ABS77464.1"/>
    <property type="molecule type" value="Genomic_DNA"/>
</dbReference>
<dbReference type="RefSeq" id="WP_005770033.1">
    <property type="nucleotide sequence ID" value="NC_009727.1"/>
</dbReference>
<dbReference type="SMR" id="A9KBG0"/>
<dbReference type="KEGG" id="cbd:CBUD_0179"/>
<dbReference type="HOGENOM" id="CLU_085114_3_0_6"/>
<dbReference type="Proteomes" id="UP000008555">
    <property type="component" value="Chromosome"/>
</dbReference>
<dbReference type="GO" id="GO:0005886">
    <property type="term" value="C:plasma membrane"/>
    <property type="evidence" value="ECO:0007669"/>
    <property type="project" value="UniProtKB-SubCell"/>
</dbReference>
<dbReference type="GO" id="GO:0045259">
    <property type="term" value="C:proton-transporting ATP synthase complex"/>
    <property type="evidence" value="ECO:0007669"/>
    <property type="project" value="UniProtKB-KW"/>
</dbReference>
<dbReference type="GO" id="GO:0046933">
    <property type="term" value="F:proton-transporting ATP synthase activity, rotational mechanism"/>
    <property type="evidence" value="ECO:0007669"/>
    <property type="project" value="UniProtKB-UniRule"/>
</dbReference>
<dbReference type="Gene3D" id="1.10.520.20">
    <property type="entry name" value="N-terminal domain of the delta subunit of the F1F0-ATP synthase"/>
    <property type="match status" value="1"/>
</dbReference>
<dbReference type="HAMAP" id="MF_01416">
    <property type="entry name" value="ATP_synth_delta_bact"/>
    <property type="match status" value="1"/>
</dbReference>
<dbReference type="InterPro" id="IPR026015">
    <property type="entry name" value="ATP_synth_OSCP/delta_N_sf"/>
</dbReference>
<dbReference type="InterPro" id="IPR000711">
    <property type="entry name" value="ATPase_OSCP/dsu"/>
</dbReference>
<dbReference type="NCBIfam" id="TIGR01145">
    <property type="entry name" value="ATP_synt_delta"/>
    <property type="match status" value="1"/>
</dbReference>
<dbReference type="NCBIfam" id="NF004402">
    <property type="entry name" value="PRK05758.2-2"/>
    <property type="match status" value="1"/>
</dbReference>
<dbReference type="PANTHER" id="PTHR11910">
    <property type="entry name" value="ATP SYNTHASE DELTA CHAIN"/>
    <property type="match status" value="1"/>
</dbReference>
<dbReference type="Pfam" id="PF00213">
    <property type="entry name" value="OSCP"/>
    <property type="match status" value="1"/>
</dbReference>
<dbReference type="PRINTS" id="PR00125">
    <property type="entry name" value="ATPASEDELTA"/>
</dbReference>
<dbReference type="SUPFAM" id="SSF47928">
    <property type="entry name" value="N-terminal domain of the delta subunit of the F1F0-ATP synthase"/>
    <property type="match status" value="1"/>
</dbReference>
<accession>A9KBG0</accession>
<feature type="chain" id="PRO_1000184684" description="ATP synthase subunit delta">
    <location>
        <begin position="1"/>
        <end position="185"/>
    </location>
</feature>
<proteinExistence type="inferred from homology"/>
<organism>
    <name type="scientific">Coxiella burnetii (strain Dugway 5J108-111)</name>
    <dbReference type="NCBI Taxonomy" id="434922"/>
    <lineage>
        <taxon>Bacteria</taxon>
        <taxon>Pseudomonadati</taxon>
        <taxon>Pseudomonadota</taxon>
        <taxon>Gammaproteobacteria</taxon>
        <taxon>Legionellales</taxon>
        <taxon>Coxiellaceae</taxon>
        <taxon>Coxiella</taxon>
    </lineage>
</organism>
<comment type="function">
    <text evidence="1">F(1)F(0) ATP synthase produces ATP from ADP in the presence of a proton or sodium gradient. F-type ATPases consist of two structural domains, F(1) containing the extramembraneous catalytic core and F(0) containing the membrane proton channel, linked together by a central stalk and a peripheral stalk. During catalysis, ATP synthesis in the catalytic domain of F(1) is coupled via a rotary mechanism of the central stalk subunits to proton translocation.</text>
</comment>
<comment type="function">
    <text evidence="1">This protein is part of the stalk that links CF(0) to CF(1). It either transmits conformational changes from CF(0) to CF(1) or is implicated in proton conduction.</text>
</comment>
<comment type="subunit">
    <text evidence="1">F-type ATPases have 2 components, F(1) - the catalytic core - and F(0) - the membrane proton channel. F(1) has five subunits: alpha(3), beta(3), gamma(1), delta(1), epsilon(1). F(0) has three main subunits: a(1), b(2) and c(10-14). The alpha and beta chains form an alternating ring which encloses part of the gamma chain. F(1) is attached to F(0) by a central stalk formed by the gamma and epsilon chains, while a peripheral stalk is formed by the delta and b chains.</text>
</comment>
<comment type="subcellular location">
    <subcellularLocation>
        <location evidence="1">Cell inner membrane</location>
        <topology evidence="1">Peripheral membrane protein</topology>
    </subcellularLocation>
</comment>
<comment type="similarity">
    <text evidence="1">Belongs to the ATPase delta chain family.</text>
</comment>
<sequence length="185" mass="21247">MALHLTLARPYAKAAFADGQKANQLEAWLAVFTAFSKIIKNKEVARQIINPKFSDKEIKTLLFDLIQTIEPESTKQLKDKIDHFLQLLIDEKRLMILPDIALVYQQLLNKYQDIIEASVTYVFPLNDEHRQQIQKQLEKRFNAEVKLKMIKDESLLGGVIIRAGNWVMDGSIKGKLTRLAENLKG</sequence>
<keyword id="KW-0066">ATP synthesis</keyword>
<keyword id="KW-0997">Cell inner membrane</keyword>
<keyword id="KW-1003">Cell membrane</keyword>
<keyword id="KW-0139">CF(1)</keyword>
<keyword id="KW-0375">Hydrogen ion transport</keyword>
<keyword id="KW-0406">Ion transport</keyword>
<keyword id="KW-0472">Membrane</keyword>
<keyword id="KW-0813">Transport</keyword>
<protein>
    <recommendedName>
        <fullName evidence="1">ATP synthase subunit delta</fullName>
    </recommendedName>
    <alternativeName>
        <fullName evidence="1">ATP synthase F(1) sector subunit delta</fullName>
    </alternativeName>
    <alternativeName>
        <fullName evidence="1">F-type ATPase subunit delta</fullName>
        <shortName evidence="1">F-ATPase subunit delta</shortName>
    </alternativeName>
</protein>
<evidence type="ECO:0000255" key="1">
    <source>
        <dbReference type="HAMAP-Rule" id="MF_01416"/>
    </source>
</evidence>